<organism>
    <name type="scientific">Chlorobium luteolum (strain DSM 273 / BCRC 81028 / 2530)</name>
    <name type="common">Pelodictyon luteolum</name>
    <dbReference type="NCBI Taxonomy" id="319225"/>
    <lineage>
        <taxon>Bacteria</taxon>
        <taxon>Pseudomonadati</taxon>
        <taxon>Chlorobiota</taxon>
        <taxon>Chlorobiia</taxon>
        <taxon>Chlorobiales</taxon>
        <taxon>Chlorobiaceae</taxon>
        <taxon>Chlorobium/Pelodictyon group</taxon>
        <taxon>Pelodictyon</taxon>
    </lineage>
</organism>
<protein>
    <recommendedName>
        <fullName evidence="1">Hydrogenase maturation factor HypA</fullName>
    </recommendedName>
</protein>
<name>HYPA_CHLL3</name>
<dbReference type="EMBL" id="CP000096">
    <property type="protein sequence ID" value="ABB24318.1"/>
    <property type="molecule type" value="Genomic_DNA"/>
</dbReference>
<dbReference type="RefSeq" id="WP_011358190.1">
    <property type="nucleotide sequence ID" value="NC_007512.1"/>
</dbReference>
<dbReference type="SMR" id="Q3B2W3"/>
<dbReference type="STRING" id="319225.Plut_1459"/>
<dbReference type="KEGG" id="plt:Plut_1459"/>
<dbReference type="eggNOG" id="COG0375">
    <property type="taxonomic scope" value="Bacteria"/>
</dbReference>
<dbReference type="HOGENOM" id="CLU_126929_3_0_10"/>
<dbReference type="OrthoDB" id="9800361at2"/>
<dbReference type="Proteomes" id="UP000002709">
    <property type="component" value="Chromosome"/>
</dbReference>
<dbReference type="GO" id="GO:0016151">
    <property type="term" value="F:nickel cation binding"/>
    <property type="evidence" value="ECO:0007669"/>
    <property type="project" value="UniProtKB-UniRule"/>
</dbReference>
<dbReference type="GO" id="GO:0008270">
    <property type="term" value="F:zinc ion binding"/>
    <property type="evidence" value="ECO:0007669"/>
    <property type="project" value="UniProtKB-UniRule"/>
</dbReference>
<dbReference type="GO" id="GO:0051604">
    <property type="term" value="P:protein maturation"/>
    <property type="evidence" value="ECO:0007669"/>
    <property type="project" value="InterPro"/>
</dbReference>
<dbReference type="GO" id="GO:0036211">
    <property type="term" value="P:protein modification process"/>
    <property type="evidence" value="ECO:0007669"/>
    <property type="project" value="UniProtKB-UniRule"/>
</dbReference>
<dbReference type="Gene3D" id="3.30.2320.80">
    <property type="match status" value="1"/>
</dbReference>
<dbReference type="HAMAP" id="MF_00213">
    <property type="entry name" value="HypA_HybF"/>
    <property type="match status" value="1"/>
</dbReference>
<dbReference type="InterPro" id="IPR020538">
    <property type="entry name" value="Hydgase_Ni_incorp_HypA/HybF_CS"/>
</dbReference>
<dbReference type="InterPro" id="IPR000688">
    <property type="entry name" value="HypA/HybF"/>
</dbReference>
<dbReference type="NCBIfam" id="TIGR00100">
    <property type="entry name" value="hypA"/>
    <property type="match status" value="1"/>
</dbReference>
<dbReference type="PANTHER" id="PTHR34535">
    <property type="entry name" value="HYDROGENASE MATURATION FACTOR HYPA"/>
    <property type="match status" value="1"/>
</dbReference>
<dbReference type="PANTHER" id="PTHR34535:SF3">
    <property type="entry name" value="HYDROGENASE MATURATION FACTOR HYPA"/>
    <property type="match status" value="1"/>
</dbReference>
<dbReference type="Pfam" id="PF01155">
    <property type="entry name" value="HypA"/>
    <property type="match status" value="1"/>
</dbReference>
<dbReference type="PIRSF" id="PIRSF004761">
    <property type="entry name" value="Hydrgn_mat_HypA"/>
    <property type="match status" value="1"/>
</dbReference>
<dbReference type="PROSITE" id="PS01249">
    <property type="entry name" value="HYPA"/>
    <property type="match status" value="1"/>
</dbReference>
<proteinExistence type="inferred from homology"/>
<gene>
    <name evidence="1" type="primary">hypA</name>
    <name type="ordered locus">Plut_1459</name>
</gene>
<keyword id="KW-0479">Metal-binding</keyword>
<keyword id="KW-0533">Nickel</keyword>
<keyword id="KW-1185">Reference proteome</keyword>
<keyword id="KW-0862">Zinc</keyword>
<comment type="function">
    <text evidence="1">Involved in the maturation of [NiFe] hydrogenases. Required for nickel insertion into the metal center of the hydrogenase.</text>
</comment>
<comment type="similarity">
    <text evidence="1">Belongs to the HypA/HybF family.</text>
</comment>
<sequence length="117" mass="12550">MHEMSIAMSIVDAVDAKARAEGAVRISLIELKIGKLAGILPEALRFCFSAAATGSLAGQAQLVIDEPDGRGRCSDCGHEFSVDFYYARCPECGSLRIVIVSGEEFLIQSIIIDEEGE</sequence>
<accession>Q3B2W3</accession>
<feature type="chain" id="PRO_1000023848" description="Hydrogenase maturation factor HypA">
    <location>
        <begin position="1"/>
        <end position="117"/>
    </location>
</feature>
<feature type="binding site" evidence="1">
    <location>
        <position position="2"/>
    </location>
    <ligand>
        <name>Ni(2+)</name>
        <dbReference type="ChEBI" id="CHEBI:49786"/>
    </ligand>
</feature>
<feature type="binding site" evidence="1">
    <location>
        <position position="73"/>
    </location>
    <ligand>
        <name>Zn(2+)</name>
        <dbReference type="ChEBI" id="CHEBI:29105"/>
    </ligand>
</feature>
<feature type="binding site" evidence="1">
    <location>
        <position position="76"/>
    </location>
    <ligand>
        <name>Zn(2+)</name>
        <dbReference type="ChEBI" id="CHEBI:29105"/>
    </ligand>
</feature>
<feature type="binding site" evidence="1">
    <location>
        <position position="89"/>
    </location>
    <ligand>
        <name>Zn(2+)</name>
        <dbReference type="ChEBI" id="CHEBI:29105"/>
    </ligand>
</feature>
<feature type="binding site" evidence="1">
    <location>
        <position position="92"/>
    </location>
    <ligand>
        <name>Zn(2+)</name>
        <dbReference type="ChEBI" id="CHEBI:29105"/>
    </ligand>
</feature>
<evidence type="ECO:0000255" key="1">
    <source>
        <dbReference type="HAMAP-Rule" id="MF_00213"/>
    </source>
</evidence>
<reference key="1">
    <citation type="submission" date="2005-08" db="EMBL/GenBank/DDBJ databases">
        <title>Complete sequence of Pelodictyon luteolum DSM 273.</title>
        <authorList>
            <consortium name="US DOE Joint Genome Institute"/>
            <person name="Copeland A."/>
            <person name="Lucas S."/>
            <person name="Lapidus A."/>
            <person name="Barry K."/>
            <person name="Detter J.C."/>
            <person name="Glavina T."/>
            <person name="Hammon N."/>
            <person name="Israni S."/>
            <person name="Pitluck S."/>
            <person name="Bryant D."/>
            <person name="Schmutz J."/>
            <person name="Larimer F."/>
            <person name="Land M."/>
            <person name="Kyrpides N."/>
            <person name="Ivanova N."/>
            <person name="Richardson P."/>
        </authorList>
    </citation>
    <scope>NUCLEOTIDE SEQUENCE [LARGE SCALE GENOMIC DNA]</scope>
    <source>
        <strain>DSM 273 / BCRC 81028 / 2530</strain>
    </source>
</reference>